<sequence>MKVVKICGIKTVEAASVAIDNGANLLGCILVPNRARTIDLEVAKQIARMVKRDRNPPPKFAGGTSTQHFEQVAQWIIENGPFLVGVFRNQPKEEVFRIAREVGLDFIQLHGSEDKLEFLGTEFGLIPRYVVPDELDLLEEQSLSLTQCVSLPLLDSEVGGEGKLLDWTFIEKLPTKAILAGGLTPENLPTFDNILGYDVSGGVETNGVKDSLKIIKFIQKGHAQSS</sequence>
<feature type="chain" id="PRO_0000154330" description="N-(5'-phosphoribosyl)anthranilate isomerase">
    <location>
        <begin position="1"/>
        <end position="226"/>
    </location>
</feature>
<feature type="sequence conflict" description="In Ref. 1; CAA55217." evidence="1" ref="1">
    <original>G</original>
    <variation>S</variation>
    <location>
        <position position="160"/>
    </location>
</feature>
<feature type="sequence conflict" description="In Ref. 1; CAA55217." evidence="1" ref="1">
    <original>NGV</original>
    <variation>SGA</variation>
    <location>
        <begin position="206"/>
        <end position="208"/>
    </location>
</feature>
<feature type="sequence conflict" description="In Ref. 1; CAA55217." evidence="1" ref="1">
    <original>K</original>
    <variation>Q</variation>
    <location>
        <position position="216"/>
    </location>
</feature>
<feature type="sequence conflict" description="In Ref. 1; CAA55217." evidence="1" ref="1">
    <original>KGHAQSS</original>
    <variation>QAHSLI</variation>
    <location>
        <begin position="220"/>
        <end position="226"/>
    </location>
</feature>
<organism>
    <name type="scientific">Candida albicans (strain SC5314 / ATCC MYA-2876)</name>
    <name type="common">Yeast</name>
    <dbReference type="NCBI Taxonomy" id="237561"/>
    <lineage>
        <taxon>Eukaryota</taxon>
        <taxon>Fungi</taxon>
        <taxon>Dikarya</taxon>
        <taxon>Ascomycota</taxon>
        <taxon>Saccharomycotina</taxon>
        <taxon>Pichiomycetes</taxon>
        <taxon>Debaryomycetaceae</taxon>
        <taxon>Candida/Lodderomyces clade</taxon>
        <taxon>Candida</taxon>
    </lineage>
</organism>
<reference key="1">
    <citation type="journal article" date="1994" name="Gene">
        <title>Characterization of the Candida albicans TRP1 gene and construction of a homozygous trp1 mutant by sequential co-transformation.</title>
        <authorList>
            <person name="Ostrander D.B."/>
            <person name="Gorman J.A."/>
        </authorList>
    </citation>
    <scope>NUCLEOTIDE SEQUENCE [GENOMIC DNA]</scope>
    <source>
        <strain>SC5314 / ATCC MYA-2876</strain>
    </source>
</reference>
<reference key="2">
    <citation type="journal article" date="2004" name="Proc. Natl. Acad. Sci. U.S.A.">
        <title>The diploid genome sequence of Candida albicans.</title>
        <authorList>
            <person name="Jones T."/>
            <person name="Federspiel N.A."/>
            <person name="Chibana H."/>
            <person name="Dungan J."/>
            <person name="Kalman S."/>
            <person name="Magee B.B."/>
            <person name="Newport G."/>
            <person name="Thorstenson Y.R."/>
            <person name="Agabian N."/>
            <person name="Magee P.T."/>
            <person name="Davis R.W."/>
            <person name="Scherer S."/>
        </authorList>
    </citation>
    <scope>NUCLEOTIDE SEQUENCE [LARGE SCALE GENOMIC DNA]</scope>
    <source>
        <strain>SC5314 / ATCC MYA-2876</strain>
    </source>
</reference>
<reference key="3">
    <citation type="journal article" date="2007" name="Genome Biol.">
        <title>Assembly of the Candida albicans genome into sixteen supercontigs aligned on the eight chromosomes.</title>
        <authorList>
            <person name="van het Hoog M."/>
            <person name="Rast T.J."/>
            <person name="Martchenko M."/>
            <person name="Grindle S."/>
            <person name="Dignard D."/>
            <person name="Hogues H."/>
            <person name="Cuomo C."/>
            <person name="Berriman M."/>
            <person name="Scherer S."/>
            <person name="Magee B.B."/>
            <person name="Whiteway M."/>
            <person name="Chibana H."/>
            <person name="Nantel A."/>
            <person name="Magee P.T."/>
        </authorList>
    </citation>
    <scope>GENOME REANNOTATION</scope>
    <source>
        <strain>SC5314 / ATCC MYA-2876</strain>
    </source>
</reference>
<reference key="4">
    <citation type="journal article" date="2013" name="Genome Biol.">
        <title>Assembly of a phased diploid Candida albicans genome facilitates allele-specific measurements and provides a simple model for repeat and indel structure.</title>
        <authorList>
            <person name="Muzzey D."/>
            <person name="Schwartz K."/>
            <person name="Weissman J.S."/>
            <person name="Sherlock G."/>
        </authorList>
    </citation>
    <scope>NUCLEOTIDE SEQUENCE [LARGE SCALE GENOMIC DNA]</scope>
    <scope>GENOME REANNOTATION</scope>
    <source>
        <strain>SC5314 / ATCC MYA-2876</strain>
    </source>
</reference>
<dbReference type="EC" id="5.3.1.24"/>
<dbReference type="EMBL" id="X78466">
    <property type="protein sequence ID" value="CAA55217.1"/>
    <property type="molecule type" value="Genomic_DNA"/>
</dbReference>
<dbReference type="EMBL" id="CP017623">
    <property type="protein sequence ID" value="AOW25714.1"/>
    <property type="molecule type" value="Genomic_DNA"/>
</dbReference>
<dbReference type="RefSeq" id="XP_719055.1">
    <property type="nucleotide sequence ID" value="XM_713962.1"/>
</dbReference>
<dbReference type="SMR" id="P43073"/>
<dbReference type="FunCoup" id="P43073">
    <property type="interactions" value="179"/>
</dbReference>
<dbReference type="STRING" id="237561.P43073"/>
<dbReference type="EnsemblFungi" id="C1_00120C_A-T">
    <property type="protein sequence ID" value="C1_00120C_A-T-p1"/>
    <property type="gene ID" value="C1_00120C_A"/>
</dbReference>
<dbReference type="GeneID" id="3639321"/>
<dbReference type="KEGG" id="cal:CAALFM_C100120CA"/>
<dbReference type="CGD" id="CAL0000186853">
    <property type="gene designation" value="TRP1"/>
</dbReference>
<dbReference type="VEuPathDB" id="FungiDB:C1_00120C_A"/>
<dbReference type="eggNOG" id="KOG4202">
    <property type="taxonomic scope" value="Eukaryota"/>
</dbReference>
<dbReference type="HOGENOM" id="CLU_076364_1_0_1"/>
<dbReference type="InParanoid" id="P43073"/>
<dbReference type="OMA" id="FHGDESP"/>
<dbReference type="OrthoDB" id="524799at2759"/>
<dbReference type="UniPathway" id="UPA00035">
    <property type="reaction ID" value="UER00042"/>
</dbReference>
<dbReference type="PRO" id="PR:P43073"/>
<dbReference type="Proteomes" id="UP000000559">
    <property type="component" value="Chromosome 1"/>
</dbReference>
<dbReference type="GO" id="GO:0004640">
    <property type="term" value="F:phosphoribosylanthranilate isomerase activity"/>
    <property type="evidence" value="ECO:0000316"/>
    <property type="project" value="CGD"/>
</dbReference>
<dbReference type="GO" id="GO:0000162">
    <property type="term" value="P:L-tryptophan biosynthetic process"/>
    <property type="evidence" value="ECO:0000315"/>
    <property type="project" value="CGD"/>
</dbReference>
<dbReference type="CDD" id="cd00405">
    <property type="entry name" value="PRAI"/>
    <property type="match status" value="1"/>
</dbReference>
<dbReference type="FunFam" id="3.20.20.70:FF:000199">
    <property type="entry name" value="Phosphoribosylanthranilate isomerase"/>
    <property type="match status" value="1"/>
</dbReference>
<dbReference type="Gene3D" id="3.20.20.70">
    <property type="entry name" value="Aldolase class I"/>
    <property type="match status" value="1"/>
</dbReference>
<dbReference type="HAMAP" id="MF_00135">
    <property type="entry name" value="PRAI"/>
    <property type="match status" value="1"/>
</dbReference>
<dbReference type="InterPro" id="IPR013785">
    <property type="entry name" value="Aldolase_TIM"/>
</dbReference>
<dbReference type="InterPro" id="IPR001240">
    <property type="entry name" value="PRAI_dom"/>
</dbReference>
<dbReference type="InterPro" id="IPR011060">
    <property type="entry name" value="RibuloseP-bd_barrel"/>
</dbReference>
<dbReference type="InterPro" id="IPR044643">
    <property type="entry name" value="TrpF_fam"/>
</dbReference>
<dbReference type="PANTHER" id="PTHR42894">
    <property type="entry name" value="N-(5'-PHOSPHORIBOSYL)ANTHRANILATE ISOMERASE"/>
    <property type="match status" value="1"/>
</dbReference>
<dbReference type="PANTHER" id="PTHR42894:SF1">
    <property type="entry name" value="N-(5'-PHOSPHORIBOSYL)ANTHRANILATE ISOMERASE"/>
    <property type="match status" value="1"/>
</dbReference>
<dbReference type="Pfam" id="PF00697">
    <property type="entry name" value="PRAI"/>
    <property type="match status" value="1"/>
</dbReference>
<dbReference type="SUPFAM" id="SSF51366">
    <property type="entry name" value="Ribulose-phoshate binding barrel"/>
    <property type="match status" value="1"/>
</dbReference>
<evidence type="ECO:0000305" key="1"/>
<proteinExistence type="inferred from homology"/>
<name>TRPF_CANAL</name>
<comment type="catalytic activity">
    <reaction>
        <text>N-(5-phospho-beta-D-ribosyl)anthranilate = 1-(2-carboxyphenylamino)-1-deoxy-D-ribulose 5-phosphate</text>
        <dbReference type="Rhea" id="RHEA:21540"/>
        <dbReference type="ChEBI" id="CHEBI:18277"/>
        <dbReference type="ChEBI" id="CHEBI:58613"/>
        <dbReference type="EC" id="5.3.1.24"/>
    </reaction>
</comment>
<comment type="pathway">
    <text>Amino-acid biosynthesis; L-tryptophan biosynthesis; L-tryptophan from chorismate: step 3/5.</text>
</comment>
<comment type="similarity">
    <text evidence="1">Belongs to the TrpF family.</text>
</comment>
<keyword id="KW-0028">Amino-acid biosynthesis</keyword>
<keyword id="KW-0057">Aromatic amino acid biosynthesis</keyword>
<keyword id="KW-0413">Isomerase</keyword>
<keyword id="KW-1185">Reference proteome</keyword>
<keyword id="KW-0822">Tryptophan biosynthesis</keyword>
<gene>
    <name type="primary">TRP1</name>
    <name type="ordered locus">CAALFM_C100120CA</name>
    <name type="ORF">CaO19.13515</name>
    <name type="ORF">CaO19.6096</name>
</gene>
<accession>P43073</accession>
<accession>A0A1D8PC52</accession>
<accession>Q5AB75</accession>
<protein>
    <recommendedName>
        <fullName>N-(5'-phosphoribosyl)anthranilate isomerase</fullName>
        <shortName>PRAI</shortName>
        <ecNumber>5.3.1.24</ecNumber>
    </recommendedName>
</protein>